<name>TAL_BURM7</name>
<organism>
    <name type="scientific">Burkholderia mallei (strain NCTC 10247)</name>
    <dbReference type="NCBI Taxonomy" id="320389"/>
    <lineage>
        <taxon>Bacteria</taxon>
        <taxon>Pseudomonadati</taxon>
        <taxon>Pseudomonadota</taxon>
        <taxon>Betaproteobacteria</taxon>
        <taxon>Burkholderiales</taxon>
        <taxon>Burkholderiaceae</taxon>
        <taxon>Burkholderia</taxon>
        <taxon>pseudomallei group</taxon>
    </lineage>
</organism>
<gene>
    <name evidence="2" type="primary">tal</name>
    <name type="ordered locus">BMA10247_0296</name>
</gene>
<accession>A3MHY5</accession>
<protein>
    <recommendedName>
        <fullName evidence="2">Transaldolase</fullName>
        <ecNumber evidence="2">2.2.1.2</ecNumber>
    </recommendedName>
</protein>
<dbReference type="EC" id="2.2.1.2" evidence="2"/>
<dbReference type="EMBL" id="CP000548">
    <property type="protein sequence ID" value="ABO03953.1"/>
    <property type="molecule type" value="Genomic_DNA"/>
</dbReference>
<dbReference type="RefSeq" id="WP_004186409.1">
    <property type="nucleotide sequence ID" value="NZ_CP007802.1"/>
</dbReference>
<dbReference type="SMR" id="A3MHY5"/>
<dbReference type="GeneID" id="92979654"/>
<dbReference type="KEGG" id="bmaz:BM44_2700"/>
<dbReference type="KEGG" id="bmn:BMA10247_0296"/>
<dbReference type="PATRIC" id="fig|320389.8.peg.3052"/>
<dbReference type="UniPathway" id="UPA00115">
    <property type="reaction ID" value="UER00414"/>
</dbReference>
<dbReference type="GO" id="GO:0005737">
    <property type="term" value="C:cytoplasm"/>
    <property type="evidence" value="ECO:0007669"/>
    <property type="project" value="UniProtKB-SubCell"/>
</dbReference>
<dbReference type="GO" id="GO:0004801">
    <property type="term" value="F:transaldolase activity"/>
    <property type="evidence" value="ECO:0000250"/>
    <property type="project" value="UniProtKB"/>
</dbReference>
<dbReference type="GO" id="GO:0005975">
    <property type="term" value="P:carbohydrate metabolic process"/>
    <property type="evidence" value="ECO:0007669"/>
    <property type="project" value="InterPro"/>
</dbReference>
<dbReference type="GO" id="GO:0009052">
    <property type="term" value="P:pentose-phosphate shunt, non-oxidative branch"/>
    <property type="evidence" value="ECO:0007669"/>
    <property type="project" value="TreeGrafter"/>
</dbReference>
<dbReference type="CDD" id="cd00957">
    <property type="entry name" value="Transaldolase_TalAB"/>
    <property type="match status" value="1"/>
</dbReference>
<dbReference type="FunFam" id="3.20.20.70:FF:000002">
    <property type="entry name" value="Transaldolase"/>
    <property type="match status" value="1"/>
</dbReference>
<dbReference type="Gene3D" id="3.20.20.70">
    <property type="entry name" value="Aldolase class I"/>
    <property type="match status" value="1"/>
</dbReference>
<dbReference type="HAMAP" id="MF_00492">
    <property type="entry name" value="Transaldolase_1"/>
    <property type="match status" value="1"/>
</dbReference>
<dbReference type="InterPro" id="IPR013785">
    <property type="entry name" value="Aldolase_TIM"/>
</dbReference>
<dbReference type="InterPro" id="IPR001585">
    <property type="entry name" value="TAL/FSA"/>
</dbReference>
<dbReference type="InterPro" id="IPR004730">
    <property type="entry name" value="Transaldolase_1"/>
</dbReference>
<dbReference type="InterPro" id="IPR018225">
    <property type="entry name" value="Transaldolase_AS"/>
</dbReference>
<dbReference type="NCBIfam" id="TIGR00874">
    <property type="entry name" value="talAB"/>
    <property type="match status" value="1"/>
</dbReference>
<dbReference type="PANTHER" id="PTHR10683">
    <property type="entry name" value="TRANSALDOLASE"/>
    <property type="match status" value="1"/>
</dbReference>
<dbReference type="PANTHER" id="PTHR10683:SF18">
    <property type="entry name" value="TRANSALDOLASE"/>
    <property type="match status" value="1"/>
</dbReference>
<dbReference type="Pfam" id="PF00923">
    <property type="entry name" value="TAL_FSA"/>
    <property type="match status" value="1"/>
</dbReference>
<dbReference type="SUPFAM" id="SSF51569">
    <property type="entry name" value="Aldolase"/>
    <property type="match status" value="1"/>
</dbReference>
<dbReference type="PROSITE" id="PS01054">
    <property type="entry name" value="TRANSALDOLASE_1"/>
    <property type="match status" value="1"/>
</dbReference>
<dbReference type="PROSITE" id="PS00958">
    <property type="entry name" value="TRANSALDOLASE_2"/>
    <property type="match status" value="1"/>
</dbReference>
<evidence type="ECO:0000250" key="1"/>
<evidence type="ECO:0000255" key="2">
    <source>
        <dbReference type="HAMAP-Rule" id="MF_00492"/>
    </source>
</evidence>
<sequence>MTTALDQLKQYTTVVADTGDFQQLAQYKPQDATTNPSLILKAVQKDAYRPILEKTVRDHAGESVGFIIDRLLIAFGTEILKLIPGRVSTEVDARLSFDTQRSIDKGREIIKLYEAAGVGRERVLIKLASTWEGIRAAEVLQREGIRCNMTLLFSLVQAAACAEAGAQLISPFVGRIYDWYRKQKGADWDEAQDGGANDPGVQSVRRIYTYYKHFGYRTEVMGASFRTTSQITELAGCDLLTISPELLQKLHDSTEAVARKLSPDEARDARLERVAIDESSFRFQLNDDAMATEKLAEGIRLFSADAVKLEKMIEALR</sequence>
<proteinExistence type="inferred from homology"/>
<feature type="chain" id="PRO_1000014490" description="Transaldolase">
    <location>
        <begin position="1"/>
        <end position="317"/>
    </location>
</feature>
<feature type="active site" description="Schiff-base intermediate with substrate" evidence="2">
    <location>
        <position position="126"/>
    </location>
</feature>
<reference key="1">
    <citation type="journal article" date="2010" name="Genome Biol. Evol.">
        <title>Continuing evolution of Burkholderia mallei through genome reduction and large-scale rearrangements.</title>
        <authorList>
            <person name="Losada L."/>
            <person name="Ronning C.M."/>
            <person name="DeShazer D."/>
            <person name="Woods D."/>
            <person name="Fedorova N."/>
            <person name="Kim H.S."/>
            <person name="Shabalina S.A."/>
            <person name="Pearson T.R."/>
            <person name="Brinkac L."/>
            <person name="Tan P."/>
            <person name="Nandi T."/>
            <person name="Crabtree J."/>
            <person name="Badger J."/>
            <person name="Beckstrom-Sternberg S."/>
            <person name="Saqib M."/>
            <person name="Schutzer S.E."/>
            <person name="Keim P."/>
            <person name="Nierman W.C."/>
        </authorList>
    </citation>
    <scope>NUCLEOTIDE SEQUENCE [LARGE SCALE GENOMIC DNA]</scope>
    <source>
        <strain>NCTC 10247</strain>
    </source>
</reference>
<comment type="function">
    <text evidence="2">Transaldolase is important for the balance of metabolites in the pentose-phosphate pathway.</text>
</comment>
<comment type="catalytic activity">
    <reaction evidence="2">
        <text>D-sedoheptulose 7-phosphate + D-glyceraldehyde 3-phosphate = D-erythrose 4-phosphate + beta-D-fructose 6-phosphate</text>
        <dbReference type="Rhea" id="RHEA:17053"/>
        <dbReference type="ChEBI" id="CHEBI:16897"/>
        <dbReference type="ChEBI" id="CHEBI:57483"/>
        <dbReference type="ChEBI" id="CHEBI:57634"/>
        <dbReference type="ChEBI" id="CHEBI:59776"/>
        <dbReference type="EC" id="2.2.1.2"/>
    </reaction>
</comment>
<comment type="pathway">
    <text evidence="2">Carbohydrate degradation; pentose phosphate pathway; D-glyceraldehyde 3-phosphate and beta-D-fructose 6-phosphate from D-ribose 5-phosphate and D-xylulose 5-phosphate (non-oxidative stage): step 2/3.</text>
</comment>
<comment type="subunit">
    <text evidence="1">Homodimer.</text>
</comment>
<comment type="subcellular location">
    <subcellularLocation>
        <location evidence="2">Cytoplasm</location>
    </subcellularLocation>
</comment>
<comment type="similarity">
    <text evidence="2">Belongs to the transaldolase family. Type 1 subfamily.</text>
</comment>
<keyword id="KW-0963">Cytoplasm</keyword>
<keyword id="KW-0570">Pentose shunt</keyword>
<keyword id="KW-0704">Schiff base</keyword>
<keyword id="KW-0808">Transferase</keyword>